<keyword id="KW-0049">Antioxidant</keyword>
<keyword id="KW-0186">Copper</keyword>
<keyword id="KW-0963">Cytoplasm</keyword>
<keyword id="KW-0903">Direct protein sequencing</keyword>
<keyword id="KW-0479">Metal-binding</keyword>
<keyword id="KW-0560">Oxidoreductase</keyword>
<keyword id="KW-0862">Zinc</keyword>
<protein>
    <recommendedName>
        <fullName>Superoxide dismutase [Cu-Zn]</fullName>
        <ecNumber>1.15.1.1</ecNumber>
    </recommendedName>
</protein>
<evidence type="ECO:0000250" key="1"/>
<evidence type="ECO:0000269" key="2">
    <source ref="1"/>
</evidence>
<evidence type="ECO:0000305" key="3"/>
<sequence length="31" mass="3109">IVAVLHSSEGVAGTITFIADSQIPLTGPNSI</sequence>
<feature type="chain" id="PRO_0000164158" description="Superoxide dismutase [Cu-Zn]">
    <location>
        <begin position="1" status="less than"/>
        <end position="31" status="greater than"/>
    </location>
</feature>
<feature type="non-consecutive residues" evidence="3">
    <location>
        <begin position="17"/>
        <end position="18"/>
    </location>
</feature>
<feature type="non-terminal residue">
    <location>
        <position position="1"/>
    </location>
</feature>
<feature type="non-terminal residue">
    <location>
        <position position="31"/>
    </location>
</feature>
<name>SODC_STRHE</name>
<comment type="function">
    <text>Destroys radicals which are normally produced within the cells and which are toxic to biological systems.</text>
</comment>
<comment type="catalytic activity">
    <reaction>
        <text>2 superoxide + 2 H(+) = H2O2 + O2</text>
        <dbReference type="Rhea" id="RHEA:20696"/>
        <dbReference type="ChEBI" id="CHEBI:15378"/>
        <dbReference type="ChEBI" id="CHEBI:15379"/>
        <dbReference type="ChEBI" id="CHEBI:16240"/>
        <dbReference type="ChEBI" id="CHEBI:18421"/>
        <dbReference type="EC" id="1.15.1.1"/>
    </reaction>
</comment>
<comment type="cofactor">
    <cofactor evidence="1">
        <name>Cu cation</name>
        <dbReference type="ChEBI" id="CHEBI:23378"/>
    </cofactor>
    <text evidence="1">Binds 1 copper ion per subunit.</text>
</comment>
<comment type="cofactor">
    <cofactor evidence="1">
        <name>Zn(2+)</name>
        <dbReference type="ChEBI" id="CHEBI:29105"/>
    </cofactor>
    <text evidence="1">Binds 1 zinc ion per subunit.</text>
</comment>
<comment type="subcellular location">
    <subcellularLocation>
        <location evidence="1">Cytoplasm</location>
    </subcellularLocation>
</comment>
<comment type="developmental stage">
    <text evidence="2">Preferentially expressed in germinating seedlings.</text>
</comment>
<comment type="similarity">
    <text evidence="3">Belongs to the Cu-Zn superoxide dismutase family.</text>
</comment>
<organism>
    <name type="scientific">Striga hermonthica</name>
    <name type="common">Purple witchweed</name>
    <name type="synonym">Buchnera hermonthica</name>
    <dbReference type="NCBI Taxonomy" id="68872"/>
    <lineage>
        <taxon>Eukaryota</taxon>
        <taxon>Viridiplantae</taxon>
        <taxon>Streptophyta</taxon>
        <taxon>Embryophyta</taxon>
        <taxon>Tracheophyta</taxon>
        <taxon>Spermatophyta</taxon>
        <taxon>Magnoliopsida</taxon>
        <taxon>eudicotyledons</taxon>
        <taxon>Gunneridae</taxon>
        <taxon>Pentapetalae</taxon>
        <taxon>asterids</taxon>
        <taxon>lamiids</taxon>
        <taxon>Lamiales</taxon>
        <taxon>Orobanchaceae</taxon>
        <taxon>Buchnereae</taxon>
        <taxon>Striga</taxon>
    </lineage>
</organism>
<dbReference type="EC" id="1.15.1.1"/>
<dbReference type="GO" id="GO:0005737">
    <property type="term" value="C:cytoplasm"/>
    <property type="evidence" value="ECO:0007669"/>
    <property type="project" value="UniProtKB-SubCell"/>
</dbReference>
<dbReference type="GO" id="GO:0046872">
    <property type="term" value="F:metal ion binding"/>
    <property type="evidence" value="ECO:0007669"/>
    <property type="project" value="UniProtKB-KW"/>
</dbReference>
<dbReference type="GO" id="GO:0004784">
    <property type="term" value="F:superoxide dismutase activity"/>
    <property type="evidence" value="ECO:0007669"/>
    <property type="project" value="UniProtKB-EC"/>
</dbReference>
<accession>P81163</accession>
<proteinExistence type="evidence at protein level"/>
<reference key="1">
    <citation type="journal article" date="1999" name="J. Exp. Bot.">
        <title>Identification of developmentally-specific markers in germinating and haustorial stages of Striga hermonthica (Del.) Benth. seedlings.</title>
        <authorList>
            <person name="Stranger A."/>
            <person name="Corbett J.M."/>
            <person name="Dunn M.J."/>
            <person name="Totty N.F."/>
            <person name="Sterling A."/>
            <person name="Bolwell G.P."/>
        </authorList>
    </citation>
    <scope>PROTEIN SEQUENCE</scope>
    <scope>DEVELOPMENTAL STAGE</scope>
    <source>
        <tissue>Seedling</tissue>
    </source>
</reference>